<organism>
    <name type="scientific">Bacillus cytotoxicus (strain DSM 22905 / CIP 110041 / 391-98 / NVH 391-98)</name>
    <dbReference type="NCBI Taxonomy" id="315749"/>
    <lineage>
        <taxon>Bacteria</taxon>
        <taxon>Bacillati</taxon>
        <taxon>Bacillota</taxon>
        <taxon>Bacilli</taxon>
        <taxon>Bacillales</taxon>
        <taxon>Bacillaceae</taxon>
        <taxon>Bacillus</taxon>
        <taxon>Bacillus cereus group</taxon>
    </lineage>
</organism>
<reference key="1">
    <citation type="journal article" date="2008" name="Chem. Biol. Interact.">
        <title>Extending the Bacillus cereus group genomics to putative food-borne pathogens of different toxicity.</title>
        <authorList>
            <person name="Lapidus A."/>
            <person name="Goltsman E."/>
            <person name="Auger S."/>
            <person name="Galleron N."/>
            <person name="Segurens B."/>
            <person name="Dossat C."/>
            <person name="Land M.L."/>
            <person name="Broussolle V."/>
            <person name="Brillard J."/>
            <person name="Guinebretiere M.-H."/>
            <person name="Sanchis V."/>
            <person name="Nguen-the C."/>
            <person name="Lereclus D."/>
            <person name="Richardson P."/>
            <person name="Wincker P."/>
            <person name="Weissenbach J."/>
            <person name="Ehrlich S.D."/>
            <person name="Sorokin A."/>
        </authorList>
    </citation>
    <scope>NUCLEOTIDE SEQUENCE [LARGE SCALE GENOMIC DNA]</scope>
    <source>
        <strain>DSM 22905 / CIP 110041 / 391-98 / NVH 391-98</strain>
    </source>
</reference>
<evidence type="ECO:0000255" key="1">
    <source>
        <dbReference type="HAMAP-Rule" id="MF_00244"/>
    </source>
</evidence>
<comment type="function">
    <text evidence="1">Catalyzes the reversible adenylation of nicotinate mononucleotide (NaMN) to nicotinic acid adenine dinucleotide (NaAD).</text>
</comment>
<comment type="catalytic activity">
    <reaction evidence="1">
        <text>nicotinate beta-D-ribonucleotide + ATP + H(+) = deamido-NAD(+) + diphosphate</text>
        <dbReference type="Rhea" id="RHEA:22860"/>
        <dbReference type="ChEBI" id="CHEBI:15378"/>
        <dbReference type="ChEBI" id="CHEBI:30616"/>
        <dbReference type="ChEBI" id="CHEBI:33019"/>
        <dbReference type="ChEBI" id="CHEBI:57502"/>
        <dbReference type="ChEBI" id="CHEBI:58437"/>
        <dbReference type="EC" id="2.7.7.18"/>
    </reaction>
</comment>
<comment type="pathway">
    <text evidence="1">Cofactor biosynthesis; NAD(+) biosynthesis; deamido-NAD(+) from nicotinate D-ribonucleotide: step 1/1.</text>
</comment>
<comment type="similarity">
    <text evidence="1">Belongs to the NadD family.</text>
</comment>
<feature type="chain" id="PRO_1000078370" description="Probable nicotinate-nucleotide adenylyltransferase">
    <location>
        <begin position="1"/>
        <end position="189"/>
    </location>
</feature>
<dbReference type="EC" id="2.7.7.18" evidence="1"/>
<dbReference type="EMBL" id="CP000764">
    <property type="protein sequence ID" value="ABS23284.1"/>
    <property type="molecule type" value="Genomic_DNA"/>
</dbReference>
<dbReference type="RefSeq" id="WP_012095522.1">
    <property type="nucleotide sequence ID" value="NC_009674.1"/>
</dbReference>
<dbReference type="SMR" id="A7GT26"/>
<dbReference type="STRING" id="315749.Bcer98_3058"/>
<dbReference type="GeneID" id="33898304"/>
<dbReference type="KEGG" id="bcy:Bcer98_3058"/>
<dbReference type="eggNOG" id="COG1057">
    <property type="taxonomic scope" value="Bacteria"/>
</dbReference>
<dbReference type="HOGENOM" id="CLU_069765_3_1_9"/>
<dbReference type="OrthoDB" id="5295945at2"/>
<dbReference type="UniPathway" id="UPA00253">
    <property type="reaction ID" value="UER00332"/>
</dbReference>
<dbReference type="Proteomes" id="UP000002300">
    <property type="component" value="Chromosome"/>
</dbReference>
<dbReference type="GO" id="GO:0005524">
    <property type="term" value="F:ATP binding"/>
    <property type="evidence" value="ECO:0007669"/>
    <property type="project" value="UniProtKB-KW"/>
</dbReference>
<dbReference type="GO" id="GO:0004515">
    <property type="term" value="F:nicotinate-nucleotide adenylyltransferase activity"/>
    <property type="evidence" value="ECO:0007669"/>
    <property type="project" value="UniProtKB-UniRule"/>
</dbReference>
<dbReference type="GO" id="GO:0009435">
    <property type="term" value="P:NAD biosynthetic process"/>
    <property type="evidence" value="ECO:0007669"/>
    <property type="project" value="UniProtKB-UniRule"/>
</dbReference>
<dbReference type="CDD" id="cd02165">
    <property type="entry name" value="NMNAT"/>
    <property type="match status" value="1"/>
</dbReference>
<dbReference type="FunFam" id="3.40.50.620:FF:000079">
    <property type="entry name" value="Probable nicotinate-nucleotide adenylyltransferase"/>
    <property type="match status" value="1"/>
</dbReference>
<dbReference type="Gene3D" id="3.40.50.620">
    <property type="entry name" value="HUPs"/>
    <property type="match status" value="1"/>
</dbReference>
<dbReference type="HAMAP" id="MF_00244">
    <property type="entry name" value="NaMN_adenylyltr"/>
    <property type="match status" value="1"/>
</dbReference>
<dbReference type="InterPro" id="IPR004821">
    <property type="entry name" value="Cyt_trans-like"/>
</dbReference>
<dbReference type="InterPro" id="IPR005248">
    <property type="entry name" value="NadD/NMNAT"/>
</dbReference>
<dbReference type="InterPro" id="IPR014729">
    <property type="entry name" value="Rossmann-like_a/b/a_fold"/>
</dbReference>
<dbReference type="NCBIfam" id="TIGR00125">
    <property type="entry name" value="cyt_tran_rel"/>
    <property type="match status" value="1"/>
</dbReference>
<dbReference type="NCBIfam" id="TIGR00482">
    <property type="entry name" value="nicotinate (nicotinamide) nucleotide adenylyltransferase"/>
    <property type="match status" value="1"/>
</dbReference>
<dbReference type="NCBIfam" id="NF000840">
    <property type="entry name" value="PRK00071.1-3"/>
    <property type="match status" value="1"/>
</dbReference>
<dbReference type="NCBIfam" id="NF000841">
    <property type="entry name" value="PRK00071.1-4"/>
    <property type="match status" value="1"/>
</dbReference>
<dbReference type="PANTHER" id="PTHR39321">
    <property type="entry name" value="NICOTINATE-NUCLEOTIDE ADENYLYLTRANSFERASE-RELATED"/>
    <property type="match status" value="1"/>
</dbReference>
<dbReference type="PANTHER" id="PTHR39321:SF3">
    <property type="entry name" value="PHOSPHOPANTETHEINE ADENYLYLTRANSFERASE"/>
    <property type="match status" value="1"/>
</dbReference>
<dbReference type="Pfam" id="PF01467">
    <property type="entry name" value="CTP_transf_like"/>
    <property type="match status" value="1"/>
</dbReference>
<dbReference type="SUPFAM" id="SSF52374">
    <property type="entry name" value="Nucleotidylyl transferase"/>
    <property type="match status" value="1"/>
</dbReference>
<protein>
    <recommendedName>
        <fullName evidence="1">Probable nicotinate-nucleotide adenylyltransferase</fullName>
        <ecNumber evidence="1">2.7.7.18</ecNumber>
    </recommendedName>
    <alternativeName>
        <fullName evidence="1">Deamido-NAD(+) diphosphorylase</fullName>
    </alternativeName>
    <alternativeName>
        <fullName evidence="1">Deamido-NAD(+) pyrophosphorylase</fullName>
    </alternativeName>
    <alternativeName>
        <fullName evidence="1">Nicotinate mononucleotide adenylyltransferase</fullName>
        <shortName evidence="1">NaMN adenylyltransferase</shortName>
    </alternativeName>
</protein>
<keyword id="KW-0067">ATP-binding</keyword>
<keyword id="KW-0520">NAD</keyword>
<keyword id="KW-0547">Nucleotide-binding</keyword>
<keyword id="KW-0548">Nucleotidyltransferase</keyword>
<keyword id="KW-0662">Pyridine nucleotide biosynthesis</keyword>
<keyword id="KW-0808">Transferase</keyword>
<gene>
    <name evidence="1" type="primary">nadD</name>
    <name type="ordered locus">Bcer98_3058</name>
</gene>
<accession>A7GT26</accession>
<name>NADD_BACCN</name>
<sequence>MKKIGIIGGTFDPPHYGHLLIANEVYHTLELDEVWFLPNQIPPHKRNRNVTSAEDRRKMLELAIEKEGYFSLCLEELEREGPSYTYDTMLQLTKKHPDTTFYFIIGGDMVEYLPKWYNIEKLLELVTFVGVARPGYTLQTPYKILTIEIPEFAVSSSLLRERYKNKKTCKYLLPEQVQSYIERNGLYES</sequence>
<proteinExistence type="inferred from homology"/>